<reference key="1">
    <citation type="submission" date="2009-05" db="EMBL/GenBank/DDBJ databases">
        <title>Complete sequence of Tolumonas auensis DSM 9187.</title>
        <authorList>
            <consortium name="US DOE Joint Genome Institute"/>
            <person name="Lucas S."/>
            <person name="Copeland A."/>
            <person name="Lapidus A."/>
            <person name="Glavina del Rio T."/>
            <person name="Tice H."/>
            <person name="Bruce D."/>
            <person name="Goodwin L."/>
            <person name="Pitluck S."/>
            <person name="Chertkov O."/>
            <person name="Brettin T."/>
            <person name="Detter J.C."/>
            <person name="Han C."/>
            <person name="Larimer F."/>
            <person name="Land M."/>
            <person name="Hauser L."/>
            <person name="Kyrpides N."/>
            <person name="Mikhailova N."/>
            <person name="Spring S."/>
            <person name="Beller H."/>
        </authorList>
    </citation>
    <scope>NUCLEOTIDE SEQUENCE [LARGE SCALE GENOMIC DNA]</scope>
    <source>
        <strain>DSM 9187 / NBRC 110442 / TA 4</strain>
    </source>
</reference>
<comment type="function">
    <text evidence="1">Catalyzes the formation of 5-methyl-uridine at position 1939 (m5U1939) in 23S rRNA.</text>
</comment>
<comment type="catalytic activity">
    <reaction evidence="1">
        <text>uridine(1939) in 23S rRNA + S-adenosyl-L-methionine = 5-methyluridine(1939) in 23S rRNA + S-adenosyl-L-homocysteine + H(+)</text>
        <dbReference type="Rhea" id="RHEA:42908"/>
        <dbReference type="Rhea" id="RHEA-COMP:10278"/>
        <dbReference type="Rhea" id="RHEA-COMP:10279"/>
        <dbReference type="ChEBI" id="CHEBI:15378"/>
        <dbReference type="ChEBI" id="CHEBI:57856"/>
        <dbReference type="ChEBI" id="CHEBI:59789"/>
        <dbReference type="ChEBI" id="CHEBI:65315"/>
        <dbReference type="ChEBI" id="CHEBI:74447"/>
        <dbReference type="EC" id="2.1.1.190"/>
    </reaction>
</comment>
<comment type="similarity">
    <text evidence="1">Belongs to the class I-like SAM-binding methyltransferase superfamily. RNA M5U methyltransferase family. RlmD subfamily.</text>
</comment>
<keyword id="KW-0004">4Fe-4S</keyword>
<keyword id="KW-0408">Iron</keyword>
<keyword id="KW-0411">Iron-sulfur</keyword>
<keyword id="KW-0479">Metal-binding</keyword>
<keyword id="KW-0489">Methyltransferase</keyword>
<keyword id="KW-1185">Reference proteome</keyword>
<keyword id="KW-0698">rRNA processing</keyword>
<keyword id="KW-0949">S-adenosyl-L-methionine</keyword>
<keyword id="KW-0808">Transferase</keyword>
<dbReference type="EC" id="2.1.1.190" evidence="1"/>
<dbReference type="EMBL" id="CP001616">
    <property type="protein sequence ID" value="ACQ94339.1"/>
    <property type="molecule type" value="Genomic_DNA"/>
</dbReference>
<dbReference type="RefSeq" id="WP_015879788.1">
    <property type="nucleotide sequence ID" value="NC_012691.1"/>
</dbReference>
<dbReference type="SMR" id="C4LBR5"/>
<dbReference type="STRING" id="595494.Tola_2746"/>
<dbReference type="KEGG" id="tau:Tola_2746"/>
<dbReference type="eggNOG" id="COG2265">
    <property type="taxonomic scope" value="Bacteria"/>
</dbReference>
<dbReference type="HOGENOM" id="CLU_014689_8_2_6"/>
<dbReference type="OrthoDB" id="9804590at2"/>
<dbReference type="Proteomes" id="UP000009073">
    <property type="component" value="Chromosome"/>
</dbReference>
<dbReference type="GO" id="GO:0051539">
    <property type="term" value="F:4 iron, 4 sulfur cluster binding"/>
    <property type="evidence" value="ECO:0007669"/>
    <property type="project" value="UniProtKB-KW"/>
</dbReference>
<dbReference type="GO" id="GO:0005506">
    <property type="term" value="F:iron ion binding"/>
    <property type="evidence" value="ECO:0007669"/>
    <property type="project" value="UniProtKB-UniRule"/>
</dbReference>
<dbReference type="GO" id="GO:0003723">
    <property type="term" value="F:RNA binding"/>
    <property type="evidence" value="ECO:0007669"/>
    <property type="project" value="InterPro"/>
</dbReference>
<dbReference type="GO" id="GO:0070041">
    <property type="term" value="F:rRNA (uridine-C5-)-methyltransferase activity"/>
    <property type="evidence" value="ECO:0007669"/>
    <property type="project" value="UniProtKB-UniRule"/>
</dbReference>
<dbReference type="GO" id="GO:0070475">
    <property type="term" value="P:rRNA base methylation"/>
    <property type="evidence" value="ECO:0007669"/>
    <property type="project" value="TreeGrafter"/>
</dbReference>
<dbReference type="CDD" id="cd02440">
    <property type="entry name" value="AdoMet_MTases"/>
    <property type="match status" value="1"/>
</dbReference>
<dbReference type="FunFam" id="3.40.50.150:FF:000009">
    <property type="entry name" value="23S rRNA (Uracil(1939)-C(5))-methyltransferase RlmD"/>
    <property type="match status" value="1"/>
</dbReference>
<dbReference type="FunFam" id="2.40.50.140:FF:000097">
    <property type="entry name" value="23S rRNA (uracil(1939)-C(5))-methyltransferase RlmD"/>
    <property type="match status" value="1"/>
</dbReference>
<dbReference type="Gene3D" id="2.40.50.1070">
    <property type="match status" value="1"/>
</dbReference>
<dbReference type="Gene3D" id="2.40.50.140">
    <property type="entry name" value="Nucleic acid-binding proteins"/>
    <property type="match status" value="1"/>
</dbReference>
<dbReference type="Gene3D" id="3.40.50.150">
    <property type="entry name" value="Vaccinia Virus protein VP39"/>
    <property type="match status" value="1"/>
</dbReference>
<dbReference type="HAMAP" id="MF_01010">
    <property type="entry name" value="23SrRNA_methyltr_RlmD"/>
    <property type="match status" value="1"/>
</dbReference>
<dbReference type="InterPro" id="IPR001566">
    <property type="entry name" value="23S_rRNA_MeTrfase_RlmD"/>
</dbReference>
<dbReference type="InterPro" id="IPR030391">
    <property type="entry name" value="MeTrfase_TrmA_CS"/>
</dbReference>
<dbReference type="InterPro" id="IPR012340">
    <property type="entry name" value="NA-bd_OB-fold"/>
</dbReference>
<dbReference type="InterPro" id="IPR029063">
    <property type="entry name" value="SAM-dependent_MTases_sf"/>
</dbReference>
<dbReference type="InterPro" id="IPR002792">
    <property type="entry name" value="TRAM_dom"/>
</dbReference>
<dbReference type="InterPro" id="IPR010280">
    <property type="entry name" value="U5_MeTrfase_fam"/>
</dbReference>
<dbReference type="NCBIfam" id="NF009639">
    <property type="entry name" value="PRK13168.1"/>
    <property type="match status" value="1"/>
</dbReference>
<dbReference type="NCBIfam" id="TIGR00479">
    <property type="entry name" value="rumA"/>
    <property type="match status" value="1"/>
</dbReference>
<dbReference type="PANTHER" id="PTHR11061:SF49">
    <property type="entry name" value="23S RRNA (URACIL(1939)-C(5))-METHYLTRANSFERASE RLMD"/>
    <property type="match status" value="1"/>
</dbReference>
<dbReference type="PANTHER" id="PTHR11061">
    <property type="entry name" value="RNA M5U METHYLTRANSFERASE"/>
    <property type="match status" value="1"/>
</dbReference>
<dbReference type="Pfam" id="PF01938">
    <property type="entry name" value="TRAM"/>
    <property type="match status" value="1"/>
</dbReference>
<dbReference type="Pfam" id="PF05958">
    <property type="entry name" value="tRNA_U5-meth_tr"/>
    <property type="match status" value="1"/>
</dbReference>
<dbReference type="SUPFAM" id="SSF50249">
    <property type="entry name" value="Nucleic acid-binding proteins"/>
    <property type="match status" value="1"/>
</dbReference>
<dbReference type="SUPFAM" id="SSF53335">
    <property type="entry name" value="S-adenosyl-L-methionine-dependent methyltransferases"/>
    <property type="match status" value="1"/>
</dbReference>
<dbReference type="PROSITE" id="PS51687">
    <property type="entry name" value="SAM_MT_RNA_M5U"/>
    <property type="match status" value="1"/>
</dbReference>
<dbReference type="PROSITE" id="PS50926">
    <property type="entry name" value="TRAM"/>
    <property type="match status" value="1"/>
</dbReference>
<dbReference type="PROSITE" id="PS01231">
    <property type="entry name" value="TRMA_2"/>
    <property type="match status" value="1"/>
</dbReference>
<gene>
    <name evidence="1" type="primary">rlmD</name>
    <name type="ordered locus">Tola_2746</name>
</gene>
<evidence type="ECO:0000255" key="1">
    <source>
        <dbReference type="HAMAP-Rule" id="MF_01010"/>
    </source>
</evidence>
<proteinExistence type="inferred from homology"/>
<organism>
    <name type="scientific">Tolumonas auensis (strain DSM 9187 / NBRC 110442 / TA 4)</name>
    <dbReference type="NCBI Taxonomy" id="595494"/>
    <lineage>
        <taxon>Bacteria</taxon>
        <taxon>Pseudomonadati</taxon>
        <taxon>Pseudomonadota</taxon>
        <taxon>Gammaproteobacteria</taxon>
        <taxon>Aeromonadales</taxon>
        <taxon>Aeromonadaceae</taxon>
        <taxon>Tolumonas</taxon>
    </lineage>
</organism>
<protein>
    <recommendedName>
        <fullName evidence="1">23S rRNA (uracil(1939)-C(5))-methyltransferase RlmD</fullName>
        <ecNumber evidence="1">2.1.1.190</ecNumber>
    </recommendedName>
    <alternativeName>
        <fullName evidence="1">23S rRNA(m5U1939)-methyltransferase</fullName>
    </alternativeName>
</protein>
<sequence>MVQFFQPKPKALPTQAVEITIDNLDHHLTGVGRYQGKACFVEGVLPGEKVSVQITEQKKQYAHARLRQVIEPSADRCEPFCPAFKQCGGCNAQMMPQAMQCQAKQQGVQRLFRQLAKIDLPAPLWIESSAPQAYRRVCRLAVKYDKNKRCVLVGFRQKQSQALVEINSCPVLTAALSALIVPLRTLINELSSARDVGHIELYETESGLAMLLRHNGRPPVKDKELLLAFALQHDCALYLQTTGYPEPLADVKPSFYQLDGLRLYFQPGDFLQVNPQVNQRLVNYVREWLAPTATDNVLDLFCGIGNFTLPLAREAASVTGIEGVDEMVQRATHNAEQNQLVNTGFHRADLTKMAEYANAGWQQQCYDLVLLDPGRTGAEAVMPWLAKSGARRIVYVSCNPVTAARDCALLQPGYTLKQWGLLDMFPHTGHVESLFLFERK</sequence>
<feature type="chain" id="PRO_0000414812" description="23S rRNA (uracil(1939)-C(5))-methyltransferase RlmD">
    <location>
        <begin position="1"/>
        <end position="440"/>
    </location>
</feature>
<feature type="domain" description="TRAM" evidence="1">
    <location>
        <begin position="10"/>
        <end position="68"/>
    </location>
</feature>
<feature type="active site" description="Nucleophile" evidence="1">
    <location>
        <position position="398"/>
    </location>
</feature>
<feature type="binding site" evidence="1">
    <location>
        <position position="81"/>
    </location>
    <ligand>
        <name>[4Fe-4S] cluster</name>
        <dbReference type="ChEBI" id="CHEBI:49883"/>
    </ligand>
</feature>
<feature type="binding site" evidence="1">
    <location>
        <position position="87"/>
    </location>
    <ligand>
        <name>[4Fe-4S] cluster</name>
        <dbReference type="ChEBI" id="CHEBI:49883"/>
    </ligand>
</feature>
<feature type="binding site" evidence="1">
    <location>
        <position position="90"/>
    </location>
    <ligand>
        <name>[4Fe-4S] cluster</name>
        <dbReference type="ChEBI" id="CHEBI:49883"/>
    </ligand>
</feature>
<feature type="binding site" evidence="1">
    <location>
        <position position="169"/>
    </location>
    <ligand>
        <name>[4Fe-4S] cluster</name>
        <dbReference type="ChEBI" id="CHEBI:49883"/>
    </ligand>
</feature>
<feature type="binding site" evidence="1">
    <location>
        <position position="272"/>
    </location>
    <ligand>
        <name>S-adenosyl-L-methionine</name>
        <dbReference type="ChEBI" id="CHEBI:59789"/>
    </ligand>
</feature>
<feature type="binding site" evidence="1">
    <location>
        <position position="301"/>
    </location>
    <ligand>
        <name>S-adenosyl-L-methionine</name>
        <dbReference type="ChEBI" id="CHEBI:59789"/>
    </ligand>
</feature>
<feature type="binding site" evidence="1">
    <location>
        <position position="306"/>
    </location>
    <ligand>
        <name>S-adenosyl-L-methionine</name>
        <dbReference type="ChEBI" id="CHEBI:59789"/>
    </ligand>
</feature>
<feature type="binding site" evidence="1">
    <location>
        <position position="322"/>
    </location>
    <ligand>
        <name>S-adenosyl-L-methionine</name>
        <dbReference type="ChEBI" id="CHEBI:59789"/>
    </ligand>
</feature>
<feature type="binding site" evidence="1">
    <location>
        <position position="349"/>
    </location>
    <ligand>
        <name>S-adenosyl-L-methionine</name>
        <dbReference type="ChEBI" id="CHEBI:59789"/>
    </ligand>
</feature>
<feature type="binding site" evidence="1">
    <location>
        <position position="372"/>
    </location>
    <ligand>
        <name>S-adenosyl-L-methionine</name>
        <dbReference type="ChEBI" id="CHEBI:59789"/>
    </ligand>
</feature>
<accession>C4LBR5</accession>
<name>RLMD_TOLAT</name>